<accession>Q6K8D9</accession>
<protein>
    <recommendedName>
        <fullName evidence="6">SNW/SKI-interacting protein A</fullName>
        <shortName evidence="5">OsSKIPa</shortName>
    </recommendedName>
</protein>
<comment type="function">
    <text evidence="3">Acts as a positive regulator of drought and salt tolerance. Acts as a positive regulator of cell viability.</text>
</comment>
<comment type="subunit">
    <text evidence="3 4">Interacts with FLO6/SIP4 (PubMed:19339499). Interacts with DIS1 (PubMed:22067990).</text>
</comment>
<comment type="subcellular location">
    <subcellularLocation>
        <location evidence="3">Nucleus</location>
    </subcellularLocation>
</comment>
<comment type="tissue specificity">
    <text evidence="3">Widely expressed.</text>
</comment>
<comment type="induction">
    <text evidence="3">Induced by drought, cold and salt stresses. Induced by wounding and treatment with abscisic acid (ABA), jasmonate (JA), salicylic acid (SA) and ethylene.</text>
</comment>
<comment type="miscellaneous">
    <text evidence="3">Plants silencing SKIPA exhibit growth arrest and reduced cell viability. Plants overexpressing SKIPA exhibit drought resistance and significantly improved growth performance in medium containing stress agents (abscisic acid, salt, or mannitol).</text>
</comment>
<comment type="similarity">
    <text evidence="6">Belongs to the SNW family.</text>
</comment>
<gene>
    <name evidence="5" type="primary">SKIPA</name>
    <name evidence="8" type="ordered locus">Os02g0759800</name>
    <name evidence="6" type="ordered locus">LOC_Os02g52250</name>
    <name evidence="7" type="ORF">OJ1175_B01.11</name>
    <name evidence="9" type="ORF">OsJ_08462</name>
</gene>
<evidence type="ECO:0000255" key="1"/>
<evidence type="ECO:0000256" key="2">
    <source>
        <dbReference type="SAM" id="MobiDB-lite"/>
    </source>
</evidence>
<evidence type="ECO:0000269" key="3">
    <source>
    </source>
</evidence>
<evidence type="ECO:0000269" key="4">
    <source>
    </source>
</evidence>
<evidence type="ECO:0000303" key="5">
    <source>
    </source>
</evidence>
<evidence type="ECO:0000305" key="6"/>
<evidence type="ECO:0000312" key="7">
    <source>
        <dbReference type="EMBL" id="BAD19399.1"/>
    </source>
</evidence>
<evidence type="ECO:0000312" key="8">
    <source>
        <dbReference type="EMBL" id="BAF10098.1"/>
    </source>
</evidence>
<evidence type="ECO:0000312" key="9">
    <source>
        <dbReference type="EMBL" id="EAZ24692.1"/>
    </source>
</evidence>
<dbReference type="EMBL" id="AP004159">
    <property type="protein sequence ID" value="BAD19399.1"/>
    <property type="molecule type" value="Genomic_DNA"/>
</dbReference>
<dbReference type="EMBL" id="AP008208">
    <property type="protein sequence ID" value="BAF10098.1"/>
    <property type="molecule type" value="Genomic_DNA"/>
</dbReference>
<dbReference type="EMBL" id="AP014958">
    <property type="protein sequence ID" value="BAS81021.1"/>
    <property type="molecule type" value="Genomic_DNA"/>
</dbReference>
<dbReference type="EMBL" id="CM000139">
    <property type="protein sequence ID" value="EAZ24692.1"/>
    <property type="molecule type" value="Genomic_DNA"/>
</dbReference>
<dbReference type="SMR" id="Q6K8D9"/>
<dbReference type="FunCoup" id="Q6K8D9">
    <property type="interactions" value="2949"/>
</dbReference>
<dbReference type="STRING" id="39947.Q6K8D9"/>
<dbReference type="PaxDb" id="39947-Q6K8D9"/>
<dbReference type="EnsemblPlants" id="Os02t0759800-01">
    <property type="protein sequence ID" value="Os02t0759800-01"/>
    <property type="gene ID" value="Os02g0759800"/>
</dbReference>
<dbReference type="GeneID" id="4330796"/>
<dbReference type="Gramene" id="Os02t0759800-01">
    <property type="protein sequence ID" value="Os02t0759800-01"/>
    <property type="gene ID" value="Os02g0759800"/>
</dbReference>
<dbReference type="KEGG" id="dosa:Os02g0759800"/>
<dbReference type="KEGG" id="osa:4330796"/>
<dbReference type="eggNOG" id="KOG2441">
    <property type="taxonomic scope" value="Eukaryota"/>
</dbReference>
<dbReference type="HOGENOM" id="CLU_006601_2_1_1"/>
<dbReference type="InParanoid" id="Q6K8D9"/>
<dbReference type="OMA" id="YGQRRGW"/>
<dbReference type="OrthoDB" id="666364at2759"/>
<dbReference type="Proteomes" id="UP000000763">
    <property type="component" value="Chromosome 2"/>
</dbReference>
<dbReference type="Proteomes" id="UP000007752">
    <property type="component" value="Chromosome 2"/>
</dbReference>
<dbReference type="Proteomes" id="UP000059680">
    <property type="component" value="Chromosome 2"/>
</dbReference>
<dbReference type="ExpressionAtlas" id="Q6K8D9">
    <property type="expression patterns" value="baseline and differential"/>
</dbReference>
<dbReference type="GO" id="GO:0005634">
    <property type="term" value="C:nucleus"/>
    <property type="evidence" value="ECO:0000314"/>
    <property type="project" value="UniProtKB"/>
</dbReference>
<dbReference type="GO" id="GO:0005681">
    <property type="term" value="C:spliceosomal complex"/>
    <property type="evidence" value="ECO:0007669"/>
    <property type="project" value="InterPro"/>
</dbReference>
<dbReference type="GO" id="GO:0000398">
    <property type="term" value="P:mRNA splicing, via spliceosome"/>
    <property type="evidence" value="ECO:0007669"/>
    <property type="project" value="InterPro"/>
</dbReference>
<dbReference type="GO" id="GO:1901002">
    <property type="term" value="P:positive regulation of response to salt stress"/>
    <property type="evidence" value="ECO:0000315"/>
    <property type="project" value="UniProtKB"/>
</dbReference>
<dbReference type="GO" id="GO:1902584">
    <property type="term" value="P:positive regulation of response to water deprivation"/>
    <property type="evidence" value="ECO:0000315"/>
    <property type="project" value="UniProtKB"/>
</dbReference>
<dbReference type="InterPro" id="IPR017862">
    <property type="entry name" value="SKI-int_prot_SKIP"/>
</dbReference>
<dbReference type="InterPro" id="IPR004015">
    <property type="entry name" value="SKI-int_prot_SKIP_SNW-dom"/>
</dbReference>
<dbReference type="PANTHER" id="PTHR12096">
    <property type="entry name" value="NUCLEAR PROTEIN SKIP-RELATED"/>
    <property type="match status" value="1"/>
</dbReference>
<dbReference type="Pfam" id="PF02731">
    <property type="entry name" value="SKIP_SNW"/>
    <property type="match status" value="1"/>
</dbReference>
<proteinExistence type="evidence at protein level"/>
<organism>
    <name type="scientific">Oryza sativa subsp. japonica</name>
    <name type="common">Rice</name>
    <dbReference type="NCBI Taxonomy" id="39947"/>
    <lineage>
        <taxon>Eukaryota</taxon>
        <taxon>Viridiplantae</taxon>
        <taxon>Streptophyta</taxon>
        <taxon>Embryophyta</taxon>
        <taxon>Tracheophyta</taxon>
        <taxon>Spermatophyta</taxon>
        <taxon>Magnoliopsida</taxon>
        <taxon>Liliopsida</taxon>
        <taxon>Poales</taxon>
        <taxon>Poaceae</taxon>
        <taxon>BOP clade</taxon>
        <taxon>Oryzoideae</taxon>
        <taxon>Oryzeae</taxon>
        <taxon>Oryzinae</taxon>
        <taxon>Oryza</taxon>
        <taxon>Oryza sativa</taxon>
    </lineage>
</organism>
<sequence length="607" mass="67480">MASLKELLPTPKAAASTFYDHSSDPWFKERYGGESAQSDAAAAAAKPSGPAKPVPPYGKRGGFVPRRPEDFGDGGAFPEIHVAQYPLGMGRRDEKGGSKILALTVDAKGSVAFDAVVKQGENASKIVYSKHSDLVPKIATADSEATADDEEYQKQIEETTERTKAALEKVVNVRLSAAQPKNVPTHDSESKFIKYKPSQQSAAFNSGAKERIIRMSEMAQDPLEPPKFKHKRVPRASGSPPVPVMHSPPRPVTVKDQQDWKIPPCISNWKNPKGYTIPLDKRLAADGRGLQEVQINDNFAKLSEALYVAEQKAREAVQMRSKVQRELQLKEKERKEQELRALAQKARMERTGAPPAPTGVPAGGGRGAVDDREEDMDLEQPREQRRESREEREARIERDRIREERRRERERERRLEARDAAMGKKSKLTRDRDRDVSEKIALGMASTGGAKGGEVMYDQRLFNQDKGMDSGFATDDQYNIYSKGLFTAQPTLSTLYRPKKDGDSDVYGDADEQLEKVMKTDRFKPDKGFSGASERSGKRDRPVEFDKQEENDPFGLDQFLTEVKKGKKAVEKIGSGGAMRASGGSSMRDDYEGGGSGRSRINFERGR</sequence>
<name>SKIPA_ORYSJ</name>
<keyword id="KW-0175">Coiled coil</keyword>
<keyword id="KW-0539">Nucleus</keyword>
<keyword id="KW-1185">Reference proteome</keyword>
<keyword id="KW-0346">Stress response</keyword>
<reference key="1">
    <citation type="journal article" date="2005" name="Nature">
        <title>The map-based sequence of the rice genome.</title>
        <authorList>
            <consortium name="International rice genome sequencing project (IRGSP)"/>
        </authorList>
    </citation>
    <scope>NUCLEOTIDE SEQUENCE [LARGE SCALE GENOMIC DNA]</scope>
    <source>
        <strain>cv. Nipponbare</strain>
    </source>
</reference>
<reference key="2">
    <citation type="journal article" date="2008" name="Nucleic Acids Res.">
        <title>The rice annotation project database (RAP-DB): 2008 update.</title>
        <authorList>
            <consortium name="The rice annotation project (RAP)"/>
        </authorList>
    </citation>
    <scope>GENOME REANNOTATION</scope>
    <source>
        <strain>cv. Nipponbare</strain>
    </source>
</reference>
<reference key="3">
    <citation type="journal article" date="2013" name="Rice">
        <title>Improvement of the Oryza sativa Nipponbare reference genome using next generation sequence and optical map data.</title>
        <authorList>
            <person name="Kawahara Y."/>
            <person name="de la Bastide M."/>
            <person name="Hamilton J.P."/>
            <person name="Kanamori H."/>
            <person name="McCombie W.R."/>
            <person name="Ouyang S."/>
            <person name="Schwartz D.C."/>
            <person name="Tanaka T."/>
            <person name="Wu J."/>
            <person name="Zhou S."/>
            <person name="Childs K.L."/>
            <person name="Davidson R.M."/>
            <person name="Lin H."/>
            <person name="Quesada-Ocampo L."/>
            <person name="Vaillancourt B."/>
            <person name="Sakai H."/>
            <person name="Lee S.S."/>
            <person name="Kim J."/>
            <person name="Numa H."/>
            <person name="Itoh T."/>
            <person name="Buell C.R."/>
            <person name="Matsumoto T."/>
        </authorList>
    </citation>
    <scope>GENOME REANNOTATION</scope>
    <source>
        <strain>cv. Nipponbare</strain>
    </source>
</reference>
<reference key="4">
    <citation type="journal article" date="2005" name="PLoS Biol.">
        <title>The genomes of Oryza sativa: a history of duplications.</title>
        <authorList>
            <person name="Yu J."/>
            <person name="Wang J."/>
            <person name="Lin W."/>
            <person name="Li S."/>
            <person name="Li H."/>
            <person name="Zhou J."/>
            <person name="Ni P."/>
            <person name="Dong W."/>
            <person name="Hu S."/>
            <person name="Zeng C."/>
            <person name="Zhang J."/>
            <person name="Zhang Y."/>
            <person name="Li R."/>
            <person name="Xu Z."/>
            <person name="Li S."/>
            <person name="Li X."/>
            <person name="Zheng H."/>
            <person name="Cong L."/>
            <person name="Lin L."/>
            <person name="Yin J."/>
            <person name="Geng J."/>
            <person name="Li G."/>
            <person name="Shi J."/>
            <person name="Liu J."/>
            <person name="Lv H."/>
            <person name="Li J."/>
            <person name="Wang J."/>
            <person name="Deng Y."/>
            <person name="Ran L."/>
            <person name="Shi X."/>
            <person name="Wang X."/>
            <person name="Wu Q."/>
            <person name="Li C."/>
            <person name="Ren X."/>
            <person name="Wang J."/>
            <person name="Wang X."/>
            <person name="Li D."/>
            <person name="Liu D."/>
            <person name="Zhang X."/>
            <person name="Ji Z."/>
            <person name="Zhao W."/>
            <person name="Sun Y."/>
            <person name="Zhang Z."/>
            <person name="Bao J."/>
            <person name="Han Y."/>
            <person name="Dong L."/>
            <person name="Ji J."/>
            <person name="Chen P."/>
            <person name="Wu S."/>
            <person name="Liu J."/>
            <person name="Xiao Y."/>
            <person name="Bu D."/>
            <person name="Tan J."/>
            <person name="Yang L."/>
            <person name="Ye C."/>
            <person name="Zhang J."/>
            <person name="Xu J."/>
            <person name="Zhou Y."/>
            <person name="Yu Y."/>
            <person name="Zhang B."/>
            <person name="Zhuang S."/>
            <person name="Wei H."/>
            <person name="Liu B."/>
            <person name="Lei M."/>
            <person name="Yu H."/>
            <person name="Li Y."/>
            <person name="Xu H."/>
            <person name="Wei S."/>
            <person name="He X."/>
            <person name="Fang L."/>
            <person name="Zhang Z."/>
            <person name="Zhang Y."/>
            <person name="Huang X."/>
            <person name="Su Z."/>
            <person name="Tong W."/>
            <person name="Li J."/>
            <person name="Tong Z."/>
            <person name="Li S."/>
            <person name="Ye J."/>
            <person name="Wang L."/>
            <person name="Fang L."/>
            <person name="Lei T."/>
            <person name="Chen C.-S."/>
            <person name="Chen H.-C."/>
            <person name="Xu Z."/>
            <person name="Li H."/>
            <person name="Huang H."/>
            <person name="Zhang F."/>
            <person name="Xu H."/>
            <person name="Li N."/>
            <person name="Zhao C."/>
            <person name="Li S."/>
            <person name="Dong L."/>
            <person name="Huang Y."/>
            <person name="Li L."/>
            <person name="Xi Y."/>
            <person name="Qi Q."/>
            <person name="Li W."/>
            <person name="Zhang B."/>
            <person name="Hu W."/>
            <person name="Zhang Y."/>
            <person name="Tian X."/>
            <person name="Jiao Y."/>
            <person name="Liang X."/>
            <person name="Jin J."/>
            <person name="Gao L."/>
            <person name="Zheng W."/>
            <person name="Hao B."/>
            <person name="Liu S.-M."/>
            <person name="Wang W."/>
            <person name="Yuan L."/>
            <person name="Cao M."/>
            <person name="McDermott J."/>
            <person name="Samudrala R."/>
            <person name="Wang J."/>
            <person name="Wong G.K.-S."/>
            <person name="Yang H."/>
        </authorList>
    </citation>
    <scope>NUCLEOTIDE SEQUENCE [LARGE SCALE GENOMIC DNA]</scope>
    <source>
        <strain>cv. Nipponbare</strain>
    </source>
</reference>
<reference key="5">
    <citation type="journal article" date="2009" name="Proc. Natl. Acad. Sci. U.S.A.">
        <title>A homolog of human ski-interacting protein in rice positively regulates cell viability and stress tolerance.</title>
        <authorList>
            <person name="Hou X."/>
            <person name="Xie K."/>
            <person name="Yao J."/>
            <person name="Qi Z."/>
            <person name="Xiong L."/>
        </authorList>
    </citation>
    <scope>FUNCTION</scope>
    <scope>INTERACTION WITH FLO6/SIP4</scope>
    <scope>SUBCELLULAR LOCATION</scope>
    <scope>TISSUE SPECIFICITY</scope>
    <scope>INDUCTION</scope>
</reference>
<reference key="6">
    <citation type="journal article" date="2011" name="Plant Signal. Behav.">
        <title>OsDIS1-mediated stress response pathway in rice.</title>
        <authorList>
            <person name="Ning Y."/>
            <person name="Xie Q."/>
            <person name="Wang G.L."/>
        </authorList>
    </citation>
    <scope>INTERACTION WITH DIS1</scope>
</reference>
<feature type="chain" id="PRO_0000442183" description="SNW/SKI-interacting protein A">
    <location>
        <begin position="1"/>
        <end position="607"/>
    </location>
</feature>
<feature type="region of interest" description="Disordered" evidence="2">
    <location>
        <begin position="29"/>
        <end position="77"/>
    </location>
</feature>
<feature type="region of interest" description="Disordered" evidence="2">
    <location>
        <begin position="178"/>
        <end position="205"/>
    </location>
</feature>
<feature type="region of interest" description="SNW" evidence="6">
    <location>
        <begin position="190"/>
        <end position="353"/>
    </location>
</feature>
<feature type="region of interest" description="Disordered" evidence="2">
    <location>
        <begin position="217"/>
        <end position="265"/>
    </location>
</feature>
<feature type="region of interest" description="Disordered" evidence="2">
    <location>
        <begin position="327"/>
        <end position="434"/>
    </location>
</feature>
<feature type="region of interest" description="Disordered" evidence="2">
    <location>
        <begin position="516"/>
        <end position="607"/>
    </location>
</feature>
<feature type="coiled-coil region" evidence="1">
    <location>
        <begin position="313"/>
        <end position="349"/>
    </location>
</feature>
<feature type="coiled-coil region" evidence="1">
    <location>
        <begin position="391"/>
        <end position="418"/>
    </location>
</feature>
<feature type="compositionally biased region" description="Low complexity" evidence="2">
    <location>
        <begin position="35"/>
        <end position="49"/>
    </location>
</feature>
<feature type="compositionally biased region" description="Pro residues" evidence="2">
    <location>
        <begin position="240"/>
        <end position="251"/>
    </location>
</feature>
<feature type="compositionally biased region" description="Basic and acidic residues" evidence="2">
    <location>
        <begin position="327"/>
        <end position="339"/>
    </location>
</feature>
<feature type="compositionally biased region" description="Basic and acidic residues" evidence="2">
    <location>
        <begin position="379"/>
        <end position="434"/>
    </location>
</feature>
<feature type="compositionally biased region" description="Basic and acidic residues" evidence="2">
    <location>
        <begin position="516"/>
        <end position="527"/>
    </location>
</feature>
<feature type="compositionally biased region" description="Basic and acidic residues" evidence="2">
    <location>
        <begin position="535"/>
        <end position="550"/>
    </location>
</feature>
<feature type="compositionally biased region" description="Basic and acidic residues" evidence="2">
    <location>
        <begin position="562"/>
        <end position="571"/>
    </location>
</feature>